<gene>
    <name evidence="1" type="primary">miaA</name>
    <name type="ordered locus">cgR_1774</name>
</gene>
<organism>
    <name type="scientific">Corynebacterium glutamicum (strain R)</name>
    <dbReference type="NCBI Taxonomy" id="340322"/>
    <lineage>
        <taxon>Bacteria</taxon>
        <taxon>Bacillati</taxon>
        <taxon>Actinomycetota</taxon>
        <taxon>Actinomycetes</taxon>
        <taxon>Mycobacteriales</taxon>
        <taxon>Corynebacteriaceae</taxon>
        <taxon>Corynebacterium</taxon>
    </lineage>
</organism>
<evidence type="ECO:0000255" key="1">
    <source>
        <dbReference type="HAMAP-Rule" id="MF_00185"/>
    </source>
</evidence>
<dbReference type="EC" id="2.5.1.75" evidence="1"/>
<dbReference type="EMBL" id="AP009044">
    <property type="protein sequence ID" value="BAF54768.1"/>
    <property type="molecule type" value="Genomic_DNA"/>
</dbReference>
<dbReference type="RefSeq" id="WP_003857422.1">
    <property type="nucleotide sequence ID" value="NC_009342.1"/>
</dbReference>
<dbReference type="SMR" id="A4QEV2"/>
<dbReference type="KEGG" id="cgt:cgR_1774"/>
<dbReference type="HOGENOM" id="CLU_032616_0_1_11"/>
<dbReference type="PhylomeDB" id="A4QEV2"/>
<dbReference type="Proteomes" id="UP000006698">
    <property type="component" value="Chromosome"/>
</dbReference>
<dbReference type="GO" id="GO:0005524">
    <property type="term" value="F:ATP binding"/>
    <property type="evidence" value="ECO:0007669"/>
    <property type="project" value="UniProtKB-UniRule"/>
</dbReference>
<dbReference type="GO" id="GO:0052381">
    <property type="term" value="F:tRNA dimethylallyltransferase activity"/>
    <property type="evidence" value="ECO:0007669"/>
    <property type="project" value="UniProtKB-UniRule"/>
</dbReference>
<dbReference type="GO" id="GO:0006400">
    <property type="term" value="P:tRNA modification"/>
    <property type="evidence" value="ECO:0007669"/>
    <property type="project" value="TreeGrafter"/>
</dbReference>
<dbReference type="FunFam" id="1.10.20.140:FF:000001">
    <property type="entry name" value="tRNA dimethylallyltransferase"/>
    <property type="match status" value="1"/>
</dbReference>
<dbReference type="Gene3D" id="1.10.20.140">
    <property type="match status" value="1"/>
</dbReference>
<dbReference type="Gene3D" id="3.40.50.300">
    <property type="entry name" value="P-loop containing nucleotide triphosphate hydrolases"/>
    <property type="match status" value="1"/>
</dbReference>
<dbReference type="HAMAP" id="MF_00185">
    <property type="entry name" value="IPP_trans"/>
    <property type="match status" value="1"/>
</dbReference>
<dbReference type="InterPro" id="IPR039657">
    <property type="entry name" value="Dimethylallyltransferase"/>
</dbReference>
<dbReference type="InterPro" id="IPR018022">
    <property type="entry name" value="IPT"/>
</dbReference>
<dbReference type="InterPro" id="IPR027417">
    <property type="entry name" value="P-loop_NTPase"/>
</dbReference>
<dbReference type="NCBIfam" id="TIGR00174">
    <property type="entry name" value="miaA"/>
    <property type="match status" value="1"/>
</dbReference>
<dbReference type="PANTHER" id="PTHR11088">
    <property type="entry name" value="TRNA DIMETHYLALLYLTRANSFERASE"/>
    <property type="match status" value="1"/>
</dbReference>
<dbReference type="PANTHER" id="PTHR11088:SF60">
    <property type="entry name" value="TRNA DIMETHYLALLYLTRANSFERASE"/>
    <property type="match status" value="1"/>
</dbReference>
<dbReference type="Pfam" id="PF01715">
    <property type="entry name" value="IPPT"/>
    <property type="match status" value="1"/>
</dbReference>
<dbReference type="SUPFAM" id="SSF52540">
    <property type="entry name" value="P-loop containing nucleoside triphosphate hydrolases"/>
    <property type="match status" value="1"/>
</dbReference>
<keyword id="KW-0067">ATP-binding</keyword>
<keyword id="KW-0460">Magnesium</keyword>
<keyword id="KW-0547">Nucleotide-binding</keyword>
<keyword id="KW-0808">Transferase</keyword>
<keyword id="KW-0819">tRNA processing</keyword>
<proteinExistence type="inferred from homology"/>
<protein>
    <recommendedName>
        <fullName evidence="1">tRNA dimethylallyltransferase</fullName>
        <ecNumber evidence="1">2.5.1.75</ecNumber>
    </recommendedName>
    <alternativeName>
        <fullName evidence="1">Dimethylallyl diphosphate:tRNA dimethylallyltransferase</fullName>
        <shortName evidence="1">DMAPP:tRNA dimethylallyltransferase</shortName>
        <shortName evidence="1">DMATase</shortName>
    </alternativeName>
    <alternativeName>
        <fullName evidence="1">Isopentenyl-diphosphate:tRNA isopentenyltransferase</fullName>
        <shortName evidence="1">IPP transferase</shortName>
        <shortName evidence="1">IPPT</shortName>
        <shortName evidence="1">IPTase</shortName>
    </alternativeName>
</protein>
<accession>A4QEV2</accession>
<feature type="chain" id="PRO_1000020591" description="tRNA dimethylallyltransferase">
    <location>
        <begin position="1"/>
        <end position="301"/>
    </location>
</feature>
<feature type="region of interest" description="Interaction with substrate tRNA" evidence="1">
    <location>
        <begin position="34"/>
        <end position="37"/>
    </location>
</feature>
<feature type="binding site" evidence="1">
    <location>
        <begin position="9"/>
        <end position="16"/>
    </location>
    <ligand>
        <name>ATP</name>
        <dbReference type="ChEBI" id="CHEBI:30616"/>
    </ligand>
</feature>
<feature type="binding site" evidence="1">
    <location>
        <begin position="11"/>
        <end position="16"/>
    </location>
    <ligand>
        <name>substrate</name>
    </ligand>
</feature>
<feature type="site" description="Interaction with substrate tRNA" evidence="1">
    <location>
        <position position="100"/>
    </location>
</feature>
<feature type="site" description="Interaction with substrate tRNA" evidence="1">
    <location>
        <position position="121"/>
    </location>
</feature>
<comment type="function">
    <text evidence="1">Catalyzes the transfer of a dimethylallyl group onto the adenine at position 37 in tRNAs that read codons beginning with uridine, leading to the formation of N6-(dimethylallyl)adenosine (i(6)A).</text>
</comment>
<comment type="catalytic activity">
    <reaction evidence="1">
        <text>adenosine(37) in tRNA + dimethylallyl diphosphate = N(6)-dimethylallyladenosine(37) in tRNA + diphosphate</text>
        <dbReference type="Rhea" id="RHEA:26482"/>
        <dbReference type="Rhea" id="RHEA-COMP:10162"/>
        <dbReference type="Rhea" id="RHEA-COMP:10375"/>
        <dbReference type="ChEBI" id="CHEBI:33019"/>
        <dbReference type="ChEBI" id="CHEBI:57623"/>
        <dbReference type="ChEBI" id="CHEBI:74411"/>
        <dbReference type="ChEBI" id="CHEBI:74415"/>
        <dbReference type="EC" id="2.5.1.75"/>
    </reaction>
</comment>
<comment type="cofactor">
    <cofactor evidence="1">
        <name>Mg(2+)</name>
        <dbReference type="ChEBI" id="CHEBI:18420"/>
    </cofactor>
</comment>
<comment type="subunit">
    <text evidence="1">Monomer.</text>
</comment>
<comment type="similarity">
    <text evidence="1">Belongs to the IPP transferase family.</text>
</comment>
<name>MIAA_CORGB</name>
<reference key="1">
    <citation type="journal article" date="2007" name="Microbiology">
        <title>Comparative analysis of the Corynebacterium glutamicum group and complete genome sequence of strain R.</title>
        <authorList>
            <person name="Yukawa H."/>
            <person name="Omumasaba C.A."/>
            <person name="Nonaka H."/>
            <person name="Kos P."/>
            <person name="Okai N."/>
            <person name="Suzuki N."/>
            <person name="Suda M."/>
            <person name="Tsuge Y."/>
            <person name="Watanabe J."/>
            <person name="Ikeda Y."/>
            <person name="Vertes A.A."/>
            <person name="Inui M."/>
        </authorList>
    </citation>
    <scope>NUCLEOTIDE SEQUENCE [LARGE SCALE GENOMIC DNA]</scope>
    <source>
        <strain>R</strain>
    </source>
</reference>
<sequence length="301" mass="33084">MVTPIAVVGPTASGKSALGIALAHKLDGEVVNVDSMQLYKGMDIGTAKLTVEEREGIAHHQLDVWDVTETASVARFQSDAVADVEDIMSRGKTPILVGGSMLYVQSLVDDWQFPPTDSAVRARFEARLADIGVEALHAELTQLDPEAAAVIENNDPRRTVRALEVIELTGQPFQASQPPKDAPPRWGTRIIGLKTTPEWLNPRIEQRTAMMFEQGFVAEVEHLVQQGLIADSTAGRAIGYSQVLAAMAGEMTWEDAFERTVTGTRRYVRRQRSWFNRDHRVSWVDASGDPTAQALEILGLQ</sequence>